<protein>
    <recommendedName>
        <fullName evidence="1">4-hydroxythreonine-4-phosphate dehydrogenase</fullName>
        <ecNumber evidence="1">1.1.1.262</ecNumber>
    </recommendedName>
    <alternativeName>
        <fullName evidence="1">4-(phosphohydroxy)-L-threonine dehydrogenase</fullName>
    </alternativeName>
</protein>
<proteinExistence type="inferred from homology"/>
<accession>Q3V7R9</accession>
<sequence length="337" mass="34927">MTGMAKPLALTLGEPAGIGPDIALAAWLKREQHGLPPFYLLGDAGCLSRCAKLLGLDVPLAEVKAEDAAAAFATTLPVVSTGQIATATPGQPDATSAPAAIASIEHAVADVRSGRAAAVVTNPIAKSVLYQAGFHHPGHTEFLAELAKRDGIVPQPVMMLWCPALAVVPVTIHVSLRDAITQLTTDLIVSTARIVVKDLRERLGIAQPRLALAGLNPHAGEDGALGQEDRAVVAPAVAILRREGVDARGPLPADTMFHAAARKTYDCAICMYHDQALIPIKTIAFDEGVNVTLGLPFIRTSPDHGTAFDIAGSGQANPSSLIAALKLAAQMASAKTA</sequence>
<reference key="1">
    <citation type="journal article" date="2004" name="Nat. Biotechnol.">
        <title>Complete genome sequence of the metabolically versatile photosynthetic bacterium Rhodopseudomonas palustris.</title>
        <authorList>
            <person name="Larimer F.W."/>
            <person name="Chain P."/>
            <person name="Hauser L."/>
            <person name="Lamerdin J.E."/>
            <person name="Malfatti S."/>
            <person name="Do L."/>
            <person name="Land M.L."/>
            <person name="Pelletier D.A."/>
            <person name="Beatty J.T."/>
            <person name="Lang A.S."/>
            <person name="Tabita F.R."/>
            <person name="Gibson J.L."/>
            <person name="Hanson T.E."/>
            <person name="Bobst C."/>
            <person name="Torres y Torres J.L."/>
            <person name="Peres C."/>
            <person name="Harrison F.H."/>
            <person name="Gibson J."/>
            <person name="Harwood C.S."/>
        </authorList>
    </citation>
    <scope>NUCLEOTIDE SEQUENCE [LARGE SCALE GENOMIC DNA]</scope>
    <source>
        <strain>ATCC BAA-98 / CGA009</strain>
    </source>
</reference>
<dbReference type="EC" id="1.1.1.262" evidence="1"/>
<dbReference type="EMBL" id="BX572602">
    <property type="protein sequence ID" value="CAE28506.1"/>
    <property type="molecule type" value="Genomic_DNA"/>
</dbReference>
<dbReference type="RefSeq" id="WP_011158611.1">
    <property type="nucleotide sequence ID" value="NZ_CP116810.1"/>
</dbReference>
<dbReference type="SMR" id="Q3V7R9"/>
<dbReference type="STRING" id="258594.RPA3065"/>
<dbReference type="GeneID" id="66894147"/>
<dbReference type="eggNOG" id="COG1995">
    <property type="taxonomic scope" value="Bacteria"/>
</dbReference>
<dbReference type="HOGENOM" id="CLU_040168_1_0_5"/>
<dbReference type="PhylomeDB" id="Q3V7R9"/>
<dbReference type="UniPathway" id="UPA00244">
    <property type="reaction ID" value="UER00312"/>
</dbReference>
<dbReference type="GO" id="GO:0005737">
    <property type="term" value="C:cytoplasm"/>
    <property type="evidence" value="ECO:0007669"/>
    <property type="project" value="UniProtKB-SubCell"/>
</dbReference>
<dbReference type="GO" id="GO:0050570">
    <property type="term" value="F:4-hydroxythreonine-4-phosphate dehydrogenase activity"/>
    <property type="evidence" value="ECO:0007669"/>
    <property type="project" value="UniProtKB-UniRule"/>
</dbReference>
<dbReference type="GO" id="GO:0050897">
    <property type="term" value="F:cobalt ion binding"/>
    <property type="evidence" value="ECO:0007669"/>
    <property type="project" value="UniProtKB-UniRule"/>
</dbReference>
<dbReference type="GO" id="GO:0000287">
    <property type="term" value="F:magnesium ion binding"/>
    <property type="evidence" value="ECO:0007669"/>
    <property type="project" value="UniProtKB-UniRule"/>
</dbReference>
<dbReference type="GO" id="GO:0051287">
    <property type="term" value="F:NAD binding"/>
    <property type="evidence" value="ECO:0007669"/>
    <property type="project" value="InterPro"/>
</dbReference>
<dbReference type="GO" id="GO:0008270">
    <property type="term" value="F:zinc ion binding"/>
    <property type="evidence" value="ECO:0007669"/>
    <property type="project" value="UniProtKB-UniRule"/>
</dbReference>
<dbReference type="GO" id="GO:0042823">
    <property type="term" value="P:pyridoxal phosphate biosynthetic process"/>
    <property type="evidence" value="ECO:0007669"/>
    <property type="project" value="UniProtKB-UniRule"/>
</dbReference>
<dbReference type="GO" id="GO:0008615">
    <property type="term" value="P:pyridoxine biosynthetic process"/>
    <property type="evidence" value="ECO:0007669"/>
    <property type="project" value="UniProtKB-UniRule"/>
</dbReference>
<dbReference type="Gene3D" id="3.40.718.10">
    <property type="entry name" value="Isopropylmalate Dehydrogenase"/>
    <property type="match status" value="1"/>
</dbReference>
<dbReference type="HAMAP" id="MF_00536">
    <property type="entry name" value="PdxA"/>
    <property type="match status" value="1"/>
</dbReference>
<dbReference type="InterPro" id="IPR037510">
    <property type="entry name" value="PdxA"/>
</dbReference>
<dbReference type="InterPro" id="IPR005255">
    <property type="entry name" value="PdxA_fam"/>
</dbReference>
<dbReference type="NCBIfam" id="TIGR00557">
    <property type="entry name" value="pdxA"/>
    <property type="match status" value="1"/>
</dbReference>
<dbReference type="NCBIfam" id="NF003699">
    <property type="entry name" value="PRK05312.1"/>
    <property type="match status" value="1"/>
</dbReference>
<dbReference type="PANTHER" id="PTHR30004">
    <property type="entry name" value="4-HYDROXYTHREONINE-4-PHOSPHATE DEHYDROGENASE"/>
    <property type="match status" value="1"/>
</dbReference>
<dbReference type="PANTHER" id="PTHR30004:SF6">
    <property type="entry name" value="D-THREONATE 4-PHOSPHATE DEHYDROGENASE"/>
    <property type="match status" value="1"/>
</dbReference>
<dbReference type="Pfam" id="PF04166">
    <property type="entry name" value="PdxA"/>
    <property type="match status" value="1"/>
</dbReference>
<dbReference type="SUPFAM" id="SSF53659">
    <property type="entry name" value="Isocitrate/Isopropylmalate dehydrogenase-like"/>
    <property type="match status" value="1"/>
</dbReference>
<name>PDXA_RHOPA</name>
<gene>
    <name evidence="1" type="primary">pdxA</name>
    <name type="ordered locus">RPA3065</name>
</gene>
<comment type="function">
    <text evidence="1">Catalyzes the NAD(P)-dependent oxidation of 4-(phosphooxy)-L-threonine (HTP) into 2-amino-3-oxo-4-(phosphooxy)butyric acid which spontaneously decarboxylates to form 3-amino-2-oxopropyl phosphate (AHAP).</text>
</comment>
<comment type="catalytic activity">
    <reaction evidence="1">
        <text>4-(phosphooxy)-L-threonine + NAD(+) = 3-amino-2-oxopropyl phosphate + CO2 + NADH</text>
        <dbReference type="Rhea" id="RHEA:32275"/>
        <dbReference type="ChEBI" id="CHEBI:16526"/>
        <dbReference type="ChEBI" id="CHEBI:57279"/>
        <dbReference type="ChEBI" id="CHEBI:57540"/>
        <dbReference type="ChEBI" id="CHEBI:57945"/>
        <dbReference type="ChEBI" id="CHEBI:58452"/>
        <dbReference type="EC" id="1.1.1.262"/>
    </reaction>
</comment>
<comment type="cofactor">
    <cofactor evidence="1">
        <name>Zn(2+)</name>
        <dbReference type="ChEBI" id="CHEBI:29105"/>
    </cofactor>
    <cofactor evidence="1">
        <name>Mg(2+)</name>
        <dbReference type="ChEBI" id="CHEBI:18420"/>
    </cofactor>
    <cofactor evidence="1">
        <name>Co(2+)</name>
        <dbReference type="ChEBI" id="CHEBI:48828"/>
    </cofactor>
    <text evidence="1">Binds 1 divalent metal cation per subunit. Can use ions such as Zn(2+), Mg(2+) or Co(2+).</text>
</comment>
<comment type="pathway">
    <text evidence="1">Cofactor biosynthesis; pyridoxine 5'-phosphate biosynthesis; pyridoxine 5'-phosphate from D-erythrose 4-phosphate: step 4/5.</text>
</comment>
<comment type="subunit">
    <text evidence="1">Homodimer.</text>
</comment>
<comment type="subcellular location">
    <subcellularLocation>
        <location evidence="1">Cytoplasm</location>
    </subcellularLocation>
</comment>
<comment type="miscellaneous">
    <text evidence="1">The active site is located at the dimer interface.</text>
</comment>
<comment type="similarity">
    <text evidence="1">Belongs to the PdxA family.</text>
</comment>
<feature type="chain" id="PRO_1000051511" description="4-hydroxythreonine-4-phosphate dehydrogenase">
    <location>
        <begin position="1"/>
        <end position="337"/>
    </location>
</feature>
<feature type="binding site" evidence="1">
    <location>
        <position position="139"/>
    </location>
    <ligand>
        <name>substrate</name>
    </ligand>
</feature>
<feature type="binding site" evidence="1">
    <location>
        <position position="140"/>
    </location>
    <ligand>
        <name>substrate</name>
    </ligand>
</feature>
<feature type="binding site" evidence="1">
    <location>
        <position position="173"/>
    </location>
    <ligand>
        <name>a divalent metal cation</name>
        <dbReference type="ChEBI" id="CHEBI:60240"/>
        <note>ligand shared between dimeric partners</note>
    </ligand>
</feature>
<feature type="binding site" evidence="1">
    <location>
        <position position="218"/>
    </location>
    <ligand>
        <name>a divalent metal cation</name>
        <dbReference type="ChEBI" id="CHEBI:60240"/>
        <note>ligand shared between dimeric partners</note>
    </ligand>
</feature>
<feature type="binding site" evidence="1">
    <location>
        <position position="273"/>
    </location>
    <ligand>
        <name>a divalent metal cation</name>
        <dbReference type="ChEBI" id="CHEBI:60240"/>
        <note>ligand shared between dimeric partners</note>
    </ligand>
</feature>
<feature type="binding site" evidence="1">
    <location>
        <position position="281"/>
    </location>
    <ligand>
        <name>substrate</name>
    </ligand>
</feature>
<feature type="binding site" evidence="1">
    <location>
        <position position="290"/>
    </location>
    <ligand>
        <name>substrate</name>
    </ligand>
</feature>
<feature type="binding site" evidence="1">
    <location>
        <position position="299"/>
    </location>
    <ligand>
        <name>substrate</name>
    </ligand>
</feature>
<organism>
    <name type="scientific">Rhodopseudomonas palustris (strain ATCC BAA-98 / CGA009)</name>
    <dbReference type="NCBI Taxonomy" id="258594"/>
    <lineage>
        <taxon>Bacteria</taxon>
        <taxon>Pseudomonadati</taxon>
        <taxon>Pseudomonadota</taxon>
        <taxon>Alphaproteobacteria</taxon>
        <taxon>Hyphomicrobiales</taxon>
        <taxon>Nitrobacteraceae</taxon>
        <taxon>Rhodopseudomonas</taxon>
    </lineage>
</organism>
<keyword id="KW-0170">Cobalt</keyword>
<keyword id="KW-0963">Cytoplasm</keyword>
<keyword id="KW-0460">Magnesium</keyword>
<keyword id="KW-0479">Metal-binding</keyword>
<keyword id="KW-0520">NAD</keyword>
<keyword id="KW-0521">NADP</keyword>
<keyword id="KW-0560">Oxidoreductase</keyword>
<keyword id="KW-0664">Pyridoxine biosynthesis</keyword>
<keyword id="KW-0862">Zinc</keyword>
<evidence type="ECO:0000255" key="1">
    <source>
        <dbReference type="HAMAP-Rule" id="MF_00536"/>
    </source>
</evidence>